<evidence type="ECO:0000255" key="1">
    <source>
        <dbReference type="HAMAP-Rule" id="MF_00165"/>
    </source>
</evidence>
<proteinExistence type="inferred from homology"/>
<feature type="chain" id="PRO_1000058254" description="Probable thymidylate kinase">
    <location>
        <begin position="1"/>
        <end position="195"/>
    </location>
</feature>
<feature type="binding site" evidence="1">
    <location>
        <begin position="7"/>
        <end position="14"/>
    </location>
    <ligand>
        <name>ATP</name>
        <dbReference type="ChEBI" id="CHEBI:30616"/>
    </ligand>
</feature>
<accession>Q2NHE3</accession>
<organism>
    <name type="scientific">Methanosphaera stadtmanae (strain ATCC 43021 / DSM 3091 / JCM 11832 / MCB-3)</name>
    <dbReference type="NCBI Taxonomy" id="339860"/>
    <lineage>
        <taxon>Archaea</taxon>
        <taxon>Methanobacteriati</taxon>
        <taxon>Methanobacteriota</taxon>
        <taxon>Methanomada group</taxon>
        <taxon>Methanobacteria</taxon>
        <taxon>Methanobacteriales</taxon>
        <taxon>Methanobacteriaceae</taxon>
        <taxon>Methanosphaera</taxon>
    </lineage>
</organism>
<keyword id="KW-0067">ATP-binding</keyword>
<keyword id="KW-0418">Kinase</keyword>
<keyword id="KW-0545">Nucleotide biosynthesis</keyword>
<keyword id="KW-0547">Nucleotide-binding</keyword>
<keyword id="KW-1185">Reference proteome</keyword>
<keyword id="KW-0808">Transferase</keyword>
<sequence>MYIVLEGIDGVGKTTQTEKLKEWLEKRGFSVKTIVEPTDSDIGKIIREELLKPEATSDTNQQMLALLFAADRLTLKDEINQVKNNQQKILISDRSFYSSITYQNSTTIEPEWIYKINKHTPRPDLTIILDIDEDEALKRCDKIDTFENKEFLEKTRENYLKLVKTEKNIVKIDATPTEDVVQDEIRNQIIKYLKL</sequence>
<dbReference type="EC" id="2.7.4.9" evidence="1"/>
<dbReference type="EMBL" id="CP000102">
    <property type="protein sequence ID" value="ABC56760.1"/>
    <property type="molecule type" value="Genomic_DNA"/>
</dbReference>
<dbReference type="RefSeq" id="WP_011405960.1">
    <property type="nucleotide sequence ID" value="NC_007681.1"/>
</dbReference>
<dbReference type="SMR" id="Q2NHE3"/>
<dbReference type="STRING" id="339860.Msp_0357"/>
<dbReference type="GeneID" id="41324931"/>
<dbReference type="KEGG" id="mst:Msp_0357"/>
<dbReference type="eggNOG" id="arCOG01891">
    <property type="taxonomic scope" value="Archaea"/>
</dbReference>
<dbReference type="HOGENOM" id="CLU_049131_1_3_2"/>
<dbReference type="OrthoDB" id="43083at2157"/>
<dbReference type="Proteomes" id="UP000001931">
    <property type="component" value="Chromosome"/>
</dbReference>
<dbReference type="GO" id="GO:0005737">
    <property type="term" value="C:cytoplasm"/>
    <property type="evidence" value="ECO:0007669"/>
    <property type="project" value="TreeGrafter"/>
</dbReference>
<dbReference type="GO" id="GO:0005524">
    <property type="term" value="F:ATP binding"/>
    <property type="evidence" value="ECO:0007669"/>
    <property type="project" value="UniProtKB-UniRule"/>
</dbReference>
<dbReference type="GO" id="GO:0004798">
    <property type="term" value="F:dTMP kinase activity"/>
    <property type="evidence" value="ECO:0007669"/>
    <property type="project" value="UniProtKB-UniRule"/>
</dbReference>
<dbReference type="GO" id="GO:0006233">
    <property type="term" value="P:dTDP biosynthetic process"/>
    <property type="evidence" value="ECO:0007669"/>
    <property type="project" value="InterPro"/>
</dbReference>
<dbReference type="GO" id="GO:0006235">
    <property type="term" value="P:dTTP biosynthetic process"/>
    <property type="evidence" value="ECO:0007669"/>
    <property type="project" value="UniProtKB-UniRule"/>
</dbReference>
<dbReference type="GO" id="GO:0006227">
    <property type="term" value="P:dUDP biosynthetic process"/>
    <property type="evidence" value="ECO:0007669"/>
    <property type="project" value="TreeGrafter"/>
</dbReference>
<dbReference type="CDD" id="cd01672">
    <property type="entry name" value="TMPK"/>
    <property type="match status" value="1"/>
</dbReference>
<dbReference type="Gene3D" id="3.40.50.300">
    <property type="entry name" value="P-loop containing nucleotide triphosphate hydrolases"/>
    <property type="match status" value="1"/>
</dbReference>
<dbReference type="HAMAP" id="MF_00165">
    <property type="entry name" value="Thymidylate_kinase"/>
    <property type="match status" value="1"/>
</dbReference>
<dbReference type="InterPro" id="IPR027417">
    <property type="entry name" value="P-loop_NTPase"/>
</dbReference>
<dbReference type="InterPro" id="IPR039430">
    <property type="entry name" value="Thymidylate_kin-like_dom"/>
</dbReference>
<dbReference type="InterPro" id="IPR018094">
    <property type="entry name" value="Thymidylate_kinase"/>
</dbReference>
<dbReference type="NCBIfam" id="TIGR00041">
    <property type="entry name" value="DTMP_kinase"/>
    <property type="match status" value="1"/>
</dbReference>
<dbReference type="PANTHER" id="PTHR10344">
    <property type="entry name" value="THYMIDYLATE KINASE"/>
    <property type="match status" value="1"/>
</dbReference>
<dbReference type="PANTHER" id="PTHR10344:SF4">
    <property type="entry name" value="UMP-CMP KINASE 2, MITOCHONDRIAL"/>
    <property type="match status" value="1"/>
</dbReference>
<dbReference type="Pfam" id="PF02223">
    <property type="entry name" value="Thymidylate_kin"/>
    <property type="match status" value="1"/>
</dbReference>
<dbReference type="SUPFAM" id="SSF52540">
    <property type="entry name" value="P-loop containing nucleoside triphosphate hydrolases"/>
    <property type="match status" value="1"/>
</dbReference>
<name>KTHY_METST</name>
<reference key="1">
    <citation type="journal article" date="2006" name="J. Bacteriol.">
        <title>The genome sequence of Methanosphaera stadtmanae reveals why this human intestinal archaeon is restricted to methanol and H2 for methane formation and ATP synthesis.</title>
        <authorList>
            <person name="Fricke W.F."/>
            <person name="Seedorf H."/>
            <person name="Henne A."/>
            <person name="Kruer M."/>
            <person name="Liesegang H."/>
            <person name="Hedderich R."/>
            <person name="Gottschalk G."/>
            <person name="Thauer R.K."/>
        </authorList>
    </citation>
    <scope>NUCLEOTIDE SEQUENCE [LARGE SCALE GENOMIC DNA]</scope>
    <source>
        <strain>ATCC 43021 / DSM 3091 / JCM 11832 / MCB-3</strain>
    </source>
</reference>
<comment type="catalytic activity">
    <reaction evidence="1">
        <text>dTMP + ATP = dTDP + ADP</text>
        <dbReference type="Rhea" id="RHEA:13517"/>
        <dbReference type="ChEBI" id="CHEBI:30616"/>
        <dbReference type="ChEBI" id="CHEBI:58369"/>
        <dbReference type="ChEBI" id="CHEBI:63528"/>
        <dbReference type="ChEBI" id="CHEBI:456216"/>
        <dbReference type="EC" id="2.7.4.9"/>
    </reaction>
</comment>
<comment type="similarity">
    <text evidence="1">Belongs to the thymidylate kinase family.</text>
</comment>
<protein>
    <recommendedName>
        <fullName evidence="1">Probable thymidylate kinase</fullName>
        <ecNumber evidence="1">2.7.4.9</ecNumber>
    </recommendedName>
    <alternativeName>
        <fullName evidence="1">dTMP kinase</fullName>
    </alternativeName>
</protein>
<gene>
    <name evidence="1" type="primary">tmk</name>
    <name type="ordered locus">Msp_0357</name>
</gene>